<comment type="function">
    <text evidence="1">Binds to 23S rRNA.</text>
</comment>
<comment type="subunit">
    <text evidence="1">Part of the 50S ribosomal subunit.</text>
</comment>
<comment type="subcellular location">
    <subcellularLocation>
        <location>Plastid</location>
        <location>Chloroplast</location>
    </subcellularLocation>
</comment>
<comment type="similarity">
    <text evidence="2">Belongs to the universal ribosomal protein uL23 family.</text>
</comment>
<protein>
    <recommendedName>
        <fullName evidence="2">Large ribosomal subunit protein uL23cz/uL23cy</fullName>
    </recommendedName>
    <alternativeName>
        <fullName>50S ribosomal protein L23, chloroplastic</fullName>
    </alternativeName>
</protein>
<organism>
    <name type="scientific">Coffea arabica</name>
    <name type="common">Arabian coffee</name>
    <dbReference type="NCBI Taxonomy" id="13443"/>
    <lineage>
        <taxon>Eukaryota</taxon>
        <taxon>Viridiplantae</taxon>
        <taxon>Streptophyta</taxon>
        <taxon>Embryophyta</taxon>
        <taxon>Tracheophyta</taxon>
        <taxon>Spermatophyta</taxon>
        <taxon>Magnoliopsida</taxon>
        <taxon>eudicotyledons</taxon>
        <taxon>Gunneridae</taxon>
        <taxon>Pentapetalae</taxon>
        <taxon>asterids</taxon>
        <taxon>lamiids</taxon>
        <taxon>Gentianales</taxon>
        <taxon>Rubiaceae</taxon>
        <taxon>Ixoroideae</taxon>
        <taxon>Gardenieae complex</taxon>
        <taxon>Bertiereae - Coffeeae clade</taxon>
        <taxon>Coffeeae</taxon>
        <taxon>Coffea</taxon>
    </lineage>
</organism>
<evidence type="ECO:0000250" key="1"/>
<evidence type="ECO:0000305" key="2"/>
<keyword id="KW-0150">Chloroplast</keyword>
<keyword id="KW-0934">Plastid</keyword>
<keyword id="KW-1185">Reference proteome</keyword>
<keyword id="KW-0687">Ribonucleoprotein</keyword>
<keyword id="KW-0689">Ribosomal protein</keyword>
<keyword id="KW-0694">RNA-binding</keyword>
<keyword id="KW-0699">rRNA-binding</keyword>
<name>RK23_COFAR</name>
<gene>
    <name type="primary">rpl23-A</name>
</gene>
<gene>
    <name type="primary">rpl23-B</name>
</gene>
<dbReference type="EMBL" id="EF044213">
    <property type="protein sequence ID" value="ABJ89721.1"/>
    <property type="molecule type" value="Genomic_DNA"/>
</dbReference>
<dbReference type="EMBL" id="EF044213">
    <property type="protein sequence ID" value="ABJ89742.1"/>
    <property type="molecule type" value="Genomic_DNA"/>
</dbReference>
<dbReference type="SMR" id="A0A378"/>
<dbReference type="OrthoDB" id="1848840at2759"/>
<dbReference type="Proteomes" id="UP000515148">
    <property type="component" value="Unplaced"/>
</dbReference>
<dbReference type="GO" id="GO:0009507">
    <property type="term" value="C:chloroplast"/>
    <property type="evidence" value="ECO:0007669"/>
    <property type="project" value="UniProtKB-SubCell"/>
</dbReference>
<dbReference type="GO" id="GO:1990904">
    <property type="term" value="C:ribonucleoprotein complex"/>
    <property type="evidence" value="ECO:0007669"/>
    <property type="project" value="UniProtKB-KW"/>
</dbReference>
<dbReference type="GO" id="GO:0005840">
    <property type="term" value="C:ribosome"/>
    <property type="evidence" value="ECO:0007669"/>
    <property type="project" value="UniProtKB-KW"/>
</dbReference>
<dbReference type="GO" id="GO:0003729">
    <property type="term" value="F:mRNA binding"/>
    <property type="evidence" value="ECO:0007669"/>
    <property type="project" value="UniProtKB-ARBA"/>
</dbReference>
<dbReference type="GO" id="GO:0019843">
    <property type="term" value="F:rRNA binding"/>
    <property type="evidence" value="ECO:0007669"/>
    <property type="project" value="UniProtKB-UniRule"/>
</dbReference>
<dbReference type="GO" id="GO:0003735">
    <property type="term" value="F:structural constituent of ribosome"/>
    <property type="evidence" value="ECO:0007669"/>
    <property type="project" value="InterPro"/>
</dbReference>
<dbReference type="GO" id="GO:0006412">
    <property type="term" value="P:translation"/>
    <property type="evidence" value="ECO:0007669"/>
    <property type="project" value="UniProtKB-UniRule"/>
</dbReference>
<dbReference type="FunFam" id="3.30.70.330:FF:000002">
    <property type="entry name" value="50S ribosomal protein L23, chloroplastic"/>
    <property type="match status" value="1"/>
</dbReference>
<dbReference type="Gene3D" id="3.30.70.330">
    <property type="match status" value="1"/>
</dbReference>
<dbReference type="HAMAP" id="MF_01369_B">
    <property type="entry name" value="Ribosomal_uL23_B"/>
    <property type="match status" value="1"/>
</dbReference>
<dbReference type="InterPro" id="IPR012677">
    <property type="entry name" value="Nucleotide-bd_a/b_plait_sf"/>
</dbReference>
<dbReference type="InterPro" id="IPR013025">
    <property type="entry name" value="Ribosomal_uL23-like"/>
</dbReference>
<dbReference type="InterPro" id="IPR012678">
    <property type="entry name" value="Ribosomal_uL23/eL15/eS24_sf"/>
</dbReference>
<dbReference type="InterPro" id="IPR001014">
    <property type="entry name" value="Ribosomal_uL23_CS"/>
</dbReference>
<dbReference type="PANTHER" id="PTHR11620">
    <property type="entry name" value="60S RIBOSOMAL PROTEIN L23A"/>
    <property type="match status" value="1"/>
</dbReference>
<dbReference type="Pfam" id="PF00276">
    <property type="entry name" value="Ribosomal_L23"/>
    <property type="match status" value="1"/>
</dbReference>
<dbReference type="SUPFAM" id="SSF54189">
    <property type="entry name" value="Ribosomal proteins S24e, L23 and L15e"/>
    <property type="match status" value="1"/>
</dbReference>
<dbReference type="PROSITE" id="PS00050">
    <property type="entry name" value="RIBOSOMAL_L23"/>
    <property type="match status" value="1"/>
</dbReference>
<accession>A0A378</accession>
<feature type="chain" id="PRO_0000272893" description="Large ribosomal subunit protein uL23cz/uL23cy">
    <location>
        <begin position="1"/>
        <end position="93"/>
    </location>
</feature>
<proteinExistence type="inferred from homology"/>
<geneLocation type="chloroplast"/>
<sequence length="93" mass="10793">MDGIKYAVFTDKSIRLLGKNQYTFNVESGSTRTEIKHWVELFFGVKVIAMNSHRLPGKGRRMGPIMGHTMHYRRMIITLQPGYSIPPLRKKRT</sequence>
<reference key="1">
    <citation type="journal article" date="2007" name="Plant Biotechnol. J.">
        <title>The complete nucleotide sequence of the coffee (Coffea arabica L.) chloroplast genome: organization and implications for biotechnology and phylogenetic relationships amongst angiosperms.</title>
        <authorList>
            <person name="Samson N."/>
            <person name="Bausher M.G."/>
            <person name="Lee S.-B."/>
            <person name="Jansen R.K."/>
            <person name="Daniell H."/>
        </authorList>
    </citation>
    <scope>NUCLEOTIDE SEQUENCE [LARGE SCALE GENOMIC DNA]</scope>
</reference>